<organism>
    <name type="scientific">Escherichia coli (strain K12)</name>
    <dbReference type="NCBI Taxonomy" id="83333"/>
    <lineage>
        <taxon>Bacteria</taxon>
        <taxon>Pseudomonadati</taxon>
        <taxon>Pseudomonadota</taxon>
        <taxon>Gammaproteobacteria</taxon>
        <taxon>Enterobacterales</taxon>
        <taxon>Enterobacteriaceae</taxon>
        <taxon>Escherichia</taxon>
    </lineage>
</organism>
<sequence>MTRQKATLIGLIAIVLWSTMVGLIRGVSEGLGPVGGAAAIYSLSGLLLIFTVGFPRIRQIPKGYLLAGSLLFVSYEICLALSLGYAATHHQAIEVGMVNYLWPSLTILFAILFNGQKTNWLIVPGLLLALVGVCWVLGGDNGLHYDEIINNITTSPLSYFLAFIGAFIWAAYCTVTNKYARGFNGITVFVLLTGASLWVYYFLTPQPEMIFSTPVMIKLISAAFTLGFAYAAWNVGILHGNVTIMAVGSYFTPVLSSALAAVLLSAPLSFSFWQGALMVCGGSLLCWLATRRG</sequence>
<accession>P46136</accession>
<accession>P76124</accession>
<accession>P77342</accession>
<comment type="function">
    <text evidence="3 5">Amino acid transporter with broad substrate specificity (PubMed:17784858, PubMed:27281193). Can transport various amino acids, including phenylalanine, tyrosine, tryptophan, L-threonine, L-methionine, L-lysine, L-glutamate, L-valine and L-isoleucine (PubMed:17784858, PubMed:27281193). Overexpression confers resistance to phenylalanine and increases export of phenylalanine, tyrosine and tryptophan (PubMed:17784858).</text>
</comment>
<comment type="catalytic activity">
    <reaction evidence="7">
        <text>L-phenylalanine(in) = L-phenylalanine(out)</text>
        <dbReference type="Rhea" id="RHEA:27950"/>
        <dbReference type="ChEBI" id="CHEBI:58095"/>
    </reaction>
</comment>
<comment type="catalytic activity">
    <reaction evidence="7">
        <text>L-tyrosine(in) = L-tyrosine(out)</text>
        <dbReference type="Rhea" id="RHEA:68572"/>
        <dbReference type="ChEBI" id="CHEBI:58315"/>
    </reaction>
</comment>
<comment type="catalytic activity">
    <reaction evidence="7">
        <text>L-tryptophan(in) = L-tryptophan(out)</text>
        <dbReference type="Rhea" id="RHEA:70947"/>
        <dbReference type="ChEBI" id="CHEBI:57912"/>
    </reaction>
</comment>
<comment type="catalytic activity">
    <reaction evidence="8">
        <text>L-threonine(in) = L-threonine(out)</text>
        <dbReference type="Rhea" id="RHEA:35019"/>
        <dbReference type="ChEBI" id="CHEBI:57926"/>
    </reaction>
</comment>
<comment type="catalytic activity">
    <reaction evidence="8">
        <text>L-methionine(in) = L-methionine(out)</text>
        <dbReference type="Rhea" id="RHEA:70939"/>
        <dbReference type="ChEBI" id="CHEBI:57844"/>
    </reaction>
</comment>
<comment type="catalytic activity">
    <reaction evidence="8">
        <text>L-lysine(in) = L-lysine(out)</text>
        <dbReference type="Rhea" id="RHEA:70935"/>
        <dbReference type="ChEBI" id="CHEBI:32551"/>
    </reaction>
</comment>
<comment type="catalytic activity">
    <reaction evidence="8">
        <text>L-glutamate(out) = L-glutamate(in)</text>
        <dbReference type="Rhea" id="RHEA:66336"/>
        <dbReference type="ChEBI" id="CHEBI:29985"/>
    </reaction>
</comment>
<comment type="catalytic activity">
    <reaction evidence="8">
        <text>L-valine(in) = L-valine(out)</text>
        <dbReference type="Rhea" id="RHEA:29703"/>
        <dbReference type="ChEBI" id="CHEBI:57762"/>
    </reaction>
</comment>
<comment type="catalytic activity">
    <reaction evidence="8">
        <text>L-isoleucine(in) = L-isoleucine(out)</text>
        <dbReference type="Rhea" id="RHEA:70943"/>
        <dbReference type="ChEBI" id="CHEBI:58045"/>
    </reaction>
</comment>
<comment type="subcellular location">
    <subcellularLocation>
        <location evidence="4">Cell inner membrane</location>
        <topology evidence="4">Multi-pass membrane protein</topology>
    </subcellularLocation>
</comment>
<comment type="similarity">
    <text evidence="6">Belongs to the drug/metabolite transporter (DMT) superfamily. Aromatic amino acid/paraquat exporter (ArAA/P-E) (TC 2.A.7.17) family.</text>
</comment>
<comment type="sequence caution" evidence="6">
    <conflict type="erroneous initiation">
        <sequence resource="EMBL-CDS" id="BAA15122"/>
    </conflict>
    <text>Truncated N-terminus.</text>
</comment>
<name>YDDG_ECOLI</name>
<protein>
    <recommendedName>
        <fullName evidence="6">Aromatic amino acid exporter YddG</fullName>
    </recommendedName>
</protein>
<feature type="chain" id="PRO_0000168943" description="Aromatic amino acid exporter YddG">
    <location>
        <begin position="1"/>
        <end position="293"/>
    </location>
</feature>
<feature type="topological domain" description="Cytoplasmic" evidence="4">
    <location>
        <begin position="1"/>
        <end position="6"/>
    </location>
</feature>
<feature type="transmembrane region" description="Helical" evidence="1">
    <location>
        <begin position="7"/>
        <end position="27"/>
    </location>
</feature>
<feature type="topological domain" description="Periplasmic" evidence="4">
    <location>
        <begin position="28"/>
        <end position="33"/>
    </location>
</feature>
<feature type="transmembrane region" description="Helical" evidence="1">
    <location>
        <begin position="34"/>
        <end position="54"/>
    </location>
</feature>
<feature type="topological domain" description="Cytoplasmic" evidence="4">
    <location>
        <begin position="55"/>
        <end position="62"/>
    </location>
</feature>
<feature type="transmembrane region" description="Helical" evidence="1">
    <location>
        <begin position="63"/>
        <end position="83"/>
    </location>
</feature>
<feature type="topological domain" description="Periplasmic" evidence="4">
    <location>
        <begin position="84"/>
        <end position="92"/>
    </location>
</feature>
<feature type="transmembrane region" description="Helical" evidence="1">
    <location>
        <begin position="93"/>
        <end position="113"/>
    </location>
</feature>
<feature type="topological domain" description="Cytoplasmic" evidence="4">
    <location>
        <begin position="114"/>
        <end position="118"/>
    </location>
</feature>
<feature type="transmembrane region" description="Helical" evidence="1">
    <location>
        <begin position="119"/>
        <end position="139"/>
    </location>
</feature>
<feature type="topological domain" description="Periplasmic" evidence="4">
    <location>
        <begin position="140"/>
        <end position="155"/>
    </location>
</feature>
<feature type="transmembrane region" description="Helical" evidence="1">
    <location>
        <begin position="156"/>
        <end position="176"/>
    </location>
</feature>
<feature type="topological domain" description="Cytoplasmic" evidence="4">
    <location>
        <begin position="177"/>
        <end position="182"/>
    </location>
</feature>
<feature type="transmembrane region" description="Helical" evidence="1">
    <location>
        <begin position="183"/>
        <end position="203"/>
    </location>
</feature>
<feature type="topological domain" description="Periplasmic" evidence="4">
    <location>
        <begin position="204"/>
        <end position="218"/>
    </location>
</feature>
<feature type="transmembrane region" description="Helical" evidence="1">
    <location>
        <begin position="219"/>
        <end position="239"/>
    </location>
</feature>
<feature type="topological domain" description="Cytoplasmic" evidence="4">
    <location>
        <begin position="240"/>
        <end position="243"/>
    </location>
</feature>
<feature type="transmembrane region" description="Helical" evidence="1">
    <location>
        <begin position="244"/>
        <end position="264"/>
    </location>
</feature>
<feature type="topological domain" description="Periplasmic" evidence="4">
    <location>
        <begin position="265"/>
        <end position="267"/>
    </location>
</feature>
<feature type="transmembrane region" description="Helical" evidence="1">
    <location>
        <begin position="268"/>
        <end position="288"/>
    </location>
</feature>
<feature type="topological domain" description="Cytoplasmic" evidence="2 4">
    <location>
        <begin position="289"/>
        <end position="293"/>
    </location>
</feature>
<feature type="domain" description="EamA 1" evidence="1">
    <location>
        <begin position="6"/>
        <end position="137"/>
    </location>
</feature>
<feature type="domain" description="EamA 2" evidence="1">
    <location>
        <begin position="158"/>
        <end position="285"/>
    </location>
</feature>
<evidence type="ECO:0000255" key="1"/>
<evidence type="ECO:0000269" key="2">
    <source>
    </source>
</evidence>
<evidence type="ECO:0000269" key="3">
    <source>
    </source>
</evidence>
<evidence type="ECO:0000269" key="4">
    <source>
    </source>
</evidence>
<evidence type="ECO:0000269" key="5">
    <source>
    </source>
</evidence>
<evidence type="ECO:0000305" key="6"/>
<evidence type="ECO:0000305" key="7">
    <source>
    </source>
</evidence>
<evidence type="ECO:0000305" key="8">
    <source>
    </source>
</evidence>
<gene>
    <name type="primary">yddG</name>
    <name type="ordered locus">b1473</name>
    <name type="ordered locus">JW1469</name>
</gene>
<proteinExistence type="evidence at protein level"/>
<dbReference type="EMBL" id="U00096">
    <property type="protein sequence ID" value="AAD13437.3"/>
    <property type="molecule type" value="Genomic_DNA"/>
</dbReference>
<dbReference type="EMBL" id="AP009048">
    <property type="protein sequence ID" value="BAA15122.1"/>
    <property type="status" value="ALT_INIT"/>
    <property type="molecule type" value="Genomic_DNA"/>
</dbReference>
<dbReference type="EMBL" id="M75029">
    <property type="status" value="NOT_ANNOTATED_CDS"/>
    <property type="molecule type" value="Genomic_DNA"/>
</dbReference>
<dbReference type="PIR" id="D64900">
    <property type="entry name" value="D64900"/>
</dbReference>
<dbReference type="RefSeq" id="NP_415990.5">
    <property type="nucleotide sequence ID" value="NC_000913.3"/>
</dbReference>
<dbReference type="RefSeq" id="WP_000198205.1">
    <property type="nucleotide sequence ID" value="NZ_SSZK01000038.1"/>
</dbReference>
<dbReference type="SMR" id="P46136"/>
<dbReference type="BioGRID" id="4260205">
    <property type="interactions" value="15"/>
</dbReference>
<dbReference type="FunCoup" id="P46136">
    <property type="interactions" value="14"/>
</dbReference>
<dbReference type="STRING" id="511145.b1473"/>
<dbReference type="TCDB" id="2.A.7.17.2">
    <property type="family name" value="the drug/metabolite transporter (dmt) superfamily"/>
</dbReference>
<dbReference type="PaxDb" id="511145-b1473"/>
<dbReference type="EnsemblBacteria" id="AAD13437">
    <property type="protein sequence ID" value="AAD13437"/>
    <property type="gene ID" value="b1473"/>
</dbReference>
<dbReference type="GeneID" id="945942"/>
<dbReference type="KEGG" id="ecj:JW1469"/>
<dbReference type="KEGG" id="eco:b1473"/>
<dbReference type="PATRIC" id="fig|511145.12.peg.1539"/>
<dbReference type="EchoBASE" id="EB2574"/>
<dbReference type="eggNOG" id="COG0697">
    <property type="taxonomic scope" value="Bacteria"/>
</dbReference>
<dbReference type="HOGENOM" id="CLU_058959_1_1_6"/>
<dbReference type="InParanoid" id="P46136"/>
<dbReference type="OMA" id="VALWFHY"/>
<dbReference type="OrthoDB" id="7065924at2"/>
<dbReference type="PhylomeDB" id="P46136"/>
<dbReference type="BioCyc" id="EcoCyc:EG12713-MONOMER"/>
<dbReference type="BioCyc" id="MetaCyc:EG12713-MONOMER"/>
<dbReference type="PRO" id="PR:P46136"/>
<dbReference type="Proteomes" id="UP000000625">
    <property type="component" value="Chromosome"/>
</dbReference>
<dbReference type="GO" id="GO:0005886">
    <property type="term" value="C:plasma membrane"/>
    <property type="evidence" value="ECO:0000314"/>
    <property type="project" value="EcoCyc"/>
</dbReference>
<dbReference type="GO" id="GO:0015171">
    <property type="term" value="F:amino acid transmembrane transporter activity"/>
    <property type="evidence" value="ECO:0000314"/>
    <property type="project" value="EcoCyc"/>
</dbReference>
<dbReference type="GO" id="GO:0015173">
    <property type="term" value="F:aromatic amino acid transmembrane transporter activity"/>
    <property type="evidence" value="ECO:0000315"/>
    <property type="project" value="EcoCyc"/>
</dbReference>
<dbReference type="GO" id="GO:0032973">
    <property type="term" value="P:amino acid export across plasma membrane"/>
    <property type="evidence" value="ECO:0000314"/>
    <property type="project" value="EcoCyc"/>
</dbReference>
<dbReference type="InterPro" id="IPR051258">
    <property type="entry name" value="Diverse_Substrate_Transporter"/>
</dbReference>
<dbReference type="InterPro" id="IPR000620">
    <property type="entry name" value="EamA_dom"/>
</dbReference>
<dbReference type="NCBIfam" id="NF008676">
    <property type="entry name" value="PRK11689.1"/>
    <property type="match status" value="1"/>
</dbReference>
<dbReference type="PANTHER" id="PTHR42920:SF24">
    <property type="entry name" value="AROMATIC AMINO ACID EXPORTER YDDG"/>
    <property type="match status" value="1"/>
</dbReference>
<dbReference type="PANTHER" id="PTHR42920">
    <property type="entry name" value="OS03G0707200 PROTEIN-RELATED"/>
    <property type="match status" value="1"/>
</dbReference>
<dbReference type="Pfam" id="PF00892">
    <property type="entry name" value="EamA"/>
    <property type="match status" value="2"/>
</dbReference>
<dbReference type="SUPFAM" id="SSF103481">
    <property type="entry name" value="Multidrug resistance efflux transporter EmrE"/>
    <property type="match status" value="2"/>
</dbReference>
<reference key="1">
    <citation type="journal article" date="1996" name="DNA Res.">
        <title>A 570-kb DNA sequence of the Escherichia coli K-12 genome corresponding to the 28.0-40.1 min region on the linkage map.</title>
        <authorList>
            <person name="Aiba H."/>
            <person name="Baba T."/>
            <person name="Fujita K."/>
            <person name="Hayashi K."/>
            <person name="Inada T."/>
            <person name="Isono K."/>
            <person name="Itoh T."/>
            <person name="Kasai H."/>
            <person name="Kashimoto K."/>
            <person name="Kimura S."/>
            <person name="Kitakawa M."/>
            <person name="Kitagawa M."/>
            <person name="Makino K."/>
            <person name="Miki T."/>
            <person name="Mizobuchi K."/>
            <person name="Mori H."/>
            <person name="Mori T."/>
            <person name="Motomura K."/>
            <person name="Nakade S."/>
            <person name="Nakamura Y."/>
            <person name="Nashimoto H."/>
            <person name="Nishio Y."/>
            <person name="Oshima T."/>
            <person name="Saito N."/>
            <person name="Sampei G."/>
            <person name="Seki Y."/>
            <person name="Sivasundaram S."/>
            <person name="Tagami H."/>
            <person name="Takeda J."/>
            <person name="Takemoto K."/>
            <person name="Takeuchi Y."/>
            <person name="Wada C."/>
            <person name="Yamamoto Y."/>
            <person name="Horiuchi T."/>
        </authorList>
    </citation>
    <scope>NUCLEOTIDE SEQUENCE [LARGE SCALE GENOMIC DNA]</scope>
    <source>
        <strain>K12 / W3110 / ATCC 27325 / DSM 5911</strain>
    </source>
</reference>
<reference key="2">
    <citation type="journal article" date="1997" name="Science">
        <title>The complete genome sequence of Escherichia coli K-12.</title>
        <authorList>
            <person name="Blattner F.R."/>
            <person name="Plunkett G. III"/>
            <person name="Bloch C.A."/>
            <person name="Perna N.T."/>
            <person name="Burland V."/>
            <person name="Riley M."/>
            <person name="Collado-Vides J."/>
            <person name="Glasner J.D."/>
            <person name="Rode C.K."/>
            <person name="Mayhew G.F."/>
            <person name="Gregor J."/>
            <person name="Davis N.W."/>
            <person name="Kirkpatrick H.A."/>
            <person name="Goeden M.A."/>
            <person name="Rose D.J."/>
            <person name="Mau B."/>
            <person name="Shao Y."/>
        </authorList>
    </citation>
    <scope>NUCLEOTIDE SEQUENCE [LARGE SCALE GENOMIC DNA]</scope>
    <source>
        <strain>K12 / MG1655 / ATCC 47076</strain>
    </source>
</reference>
<reference key="3">
    <citation type="journal article" date="2006" name="Mol. Syst. Biol.">
        <title>Highly accurate genome sequences of Escherichia coli K-12 strains MG1655 and W3110.</title>
        <authorList>
            <person name="Hayashi K."/>
            <person name="Morooka N."/>
            <person name="Yamamoto Y."/>
            <person name="Fujita K."/>
            <person name="Isono K."/>
            <person name="Choi S."/>
            <person name="Ohtsubo E."/>
            <person name="Baba T."/>
            <person name="Wanner B.L."/>
            <person name="Mori H."/>
            <person name="Horiuchi T."/>
        </authorList>
    </citation>
    <scope>NUCLEOTIDE SEQUENCE [LARGE SCALE GENOMIC DNA]</scope>
    <source>
        <strain>K12 / W3110 / ATCC 27325 / DSM 5911</strain>
    </source>
</reference>
<reference key="4">
    <citation type="journal article" date="1991" name="J. Biol. Chem.">
        <title>Nitrate-inducible formate dehydrogenase in Escherichia coli K-12. I. Nucleotide sequence of the fdnGHI operon and evidence that opal (UGA) encodes selenocysteine.</title>
        <authorList>
            <person name="Berg B.L."/>
            <person name="Li J."/>
            <person name="Heider J."/>
            <person name="Stewart V."/>
        </authorList>
    </citation>
    <scope>NUCLEOTIDE SEQUENCE [GENOMIC DNA] OF 1-54</scope>
    <source>
        <strain>K12</strain>
    </source>
</reference>
<reference key="5">
    <citation type="journal article" date="1995" name="Nucleic Acids Res.">
        <title>Detection of new genes in a bacterial genome using Markov models for three gene classes.</title>
        <authorList>
            <person name="Borodovsky M."/>
            <person name="McIninch J."/>
            <person name="Koonin E.V."/>
            <person name="Rudd K.E."/>
            <person name="Medigue C."/>
            <person name="Danchin A."/>
        </authorList>
    </citation>
    <scope>IDENTIFICATION</scope>
</reference>
<reference key="6">
    <citation type="journal article" date="2005" name="Science">
        <title>Global topology analysis of the Escherichia coli inner membrane proteome.</title>
        <authorList>
            <person name="Daley D.O."/>
            <person name="Rapp M."/>
            <person name="Granseth E."/>
            <person name="Melen K."/>
            <person name="Drew D."/>
            <person name="von Heijne G."/>
        </authorList>
    </citation>
    <scope>TOPOLOGY [LARGE SCALE ANALYSIS]</scope>
    <source>
        <strain>K12 / MG1655 / ATCC 47076</strain>
    </source>
</reference>
<reference key="7">
    <citation type="journal article" date="2007" name="FEMS Microbiol. Lett.">
        <title>YddG from Escherichia coli promotes export of aromatic amino acids.</title>
        <authorList>
            <person name="Doroshenko V."/>
            <person name="Airich L."/>
            <person name="Vitushkina M."/>
            <person name="Kolokolova A."/>
            <person name="Livshits V."/>
            <person name="Mashko S."/>
        </authorList>
    </citation>
    <scope>FUNCTION</scope>
    <source>
        <strain>K12 / MG1655 / ATCC 47076</strain>
    </source>
</reference>
<reference key="8">
    <citation type="journal article" date="2010" name="J. Mol. Microbiol. Biotechnol.">
        <title>Membrane topology analysis of the Escherichia coli aromatic amino acid efflux protein YddG.</title>
        <authorList>
            <person name="Airich L.G."/>
            <person name="Tsyrenzhapova I.S."/>
            <person name="Vorontsova O.V."/>
            <person name="Feofanov A.V."/>
            <person name="Doroshenko V.G."/>
            <person name="Mashko S.V."/>
        </authorList>
    </citation>
    <scope>SUBCELLULAR LOCATION</scope>
    <scope>TOPOLOGY</scope>
    <source>
        <strain>K12</strain>
    </source>
</reference>
<reference key="9">
    <citation type="journal article" date="2016" name="Nature">
        <title>Structural basis for amino acid export by DMT superfamily transporter YddG.</title>
        <authorList>
            <person name="Tsuchiya H."/>
            <person name="Doki S."/>
            <person name="Takemoto M."/>
            <person name="Ikuta T."/>
            <person name="Higuchi T."/>
            <person name="Fukui K."/>
            <person name="Usuda Y."/>
            <person name="Tabuchi E."/>
            <person name="Nagatoishi S."/>
            <person name="Tsumoto K."/>
            <person name="Nishizawa T."/>
            <person name="Ito K."/>
            <person name="Dohmae N."/>
            <person name="Ishitani R."/>
            <person name="Nureki O."/>
        </authorList>
    </citation>
    <scope>FUNCTION</scope>
    <source>
        <strain>K12</strain>
    </source>
</reference>
<keyword id="KW-0029">Amino-acid transport</keyword>
<keyword id="KW-0997">Cell inner membrane</keyword>
<keyword id="KW-1003">Cell membrane</keyword>
<keyword id="KW-0472">Membrane</keyword>
<keyword id="KW-1185">Reference proteome</keyword>
<keyword id="KW-0677">Repeat</keyword>
<keyword id="KW-0812">Transmembrane</keyword>
<keyword id="KW-1133">Transmembrane helix</keyword>
<keyword id="KW-0813">Transport</keyword>